<feature type="peptide" id="PRO_0000455656" description="Bradykinin-potentiating peptide-like" evidence="2">
    <location>
        <begin position="1"/>
        <end position="10"/>
    </location>
</feature>
<feature type="modified residue" description="Pyrrolidone carboxylic acid" evidence="2">
    <location>
        <position position="1"/>
    </location>
</feature>
<feature type="sequence conflict" description="In Ref. 1; AA sequence." evidence="4" ref="1">
    <original>H</original>
    <variation>R</variation>
    <location>
        <position position="5"/>
    </location>
</feature>
<evidence type="ECO:0000250" key="1">
    <source>
        <dbReference type="UniProtKB" id="P68515"/>
    </source>
</evidence>
<evidence type="ECO:0000269" key="2">
    <source>
    </source>
</evidence>
<evidence type="ECO:0000303" key="3">
    <source>
    </source>
</evidence>
<evidence type="ECO:0000305" key="4"/>
<evidence type="ECO:0000305" key="5">
    <source>
    </source>
</evidence>
<dbReference type="GO" id="GO:0005576">
    <property type="term" value="C:extracellular region"/>
    <property type="evidence" value="ECO:0007669"/>
    <property type="project" value="UniProtKB-SubCell"/>
</dbReference>
<dbReference type="GO" id="GO:0090729">
    <property type="term" value="F:toxin activity"/>
    <property type="evidence" value="ECO:0007669"/>
    <property type="project" value="UniProtKB-KW"/>
</dbReference>
<accession>P0DV81</accession>
<organism>
    <name type="scientific">Bitis rhinoceros</name>
    <name type="common">West African gaboon viper</name>
    <name type="synonym">Vipera rhinoceros</name>
    <dbReference type="NCBI Taxonomy" id="715877"/>
    <lineage>
        <taxon>Eukaryota</taxon>
        <taxon>Metazoa</taxon>
        <taxon>Chordata</taxon>
        <taxon>Craniata</taxon>
        <taxon>Vertebrata</taxon>
        <taxon>Euteleostomi</taxon>
        <taxon>Lepidosauria</taxon>
        <taxon>Squamata</taxon>
        <taxon>Bifurcata</taxon>
        <taxon>Unidentata</taxon>
        <taxon>Episquamata</taxon>
        <taxon>Toxicofera</taxon>
        <taxon>Serpentes</taxon>
        <taxon>Colubroidea</taxon>
        <taxon>Viperidae</taxon>
        <taxon>Viperinae</taxon>
        <taxon>Bitis</taxon>
    </lineage>
</organism>
<protein>
    <recommendedName>
        <fullName evidence="3">Bradykinin-potentiating peptide-like</fullName>
    </recommendedName>
    <alternativeName>
        <fullName>Bothrops-like BPP</fullName>
    </alternativeName>
</protein>
<comment type="function">
    <text evidence="1">Bradykinin-potentiating peptide. It inhibits the activity of the angiotensin-converting enzyme (ACE) by a preferential interaction with its C-domain. It evokes transient hypotension.</text>
</comment>
<comment type="subcellular location">
    <subcellularLocation>
        <location evidence="2">Secreted</location>
    </subcellularLocation>
</comment>
<comment type="tissue specificity">
    <text evidence="5">Expressed by the venom gland.</text>
</comment>
<comment type="similarity">
    <text evidence="4">Belongs to the bradykinin-potentiating peptide family.</text>
</comment>
<comment type="caution">
    <text evidence="5">Two different sequences are presented in the text and in Fig.4 for the same peptide in Fucase et al., 2017.</text>
</comment>
<reference key="1">
    <citation type="journal article" date="2017" name="J. Venom. Anim. Toxins Incl. Trop. Dis.">
        <title>Isolation and biochemical characterization of bradykinin-potentiating peptides from Bitis gabonica rhinoceros.</title>
        <authorList>
            <person name="Fucase T.M."/>
            <person name="Sciani J.M."/>
            <person name="Cavalcante I."/>
            <person name="Viala V.L."/>
            <person name="Chagas B.B."/>
            <person name="Pimenta D.C."/>
            <person name="Spencer P.J."/>
        </authorList>
    </citation>
    <scope>PROTEIN SEQUENCE</scope>
    <scope>IDENTIFICATION BY MASS SPECTROMETRY</scope>
    <scope>SUBCELLULAR LOCATION</scope>
    <scope>PYROGLUTAMATE FORMATION AT GLN-1</scope>
    <source>
        <tissue>Venom</tissue>
    </source>
</reference>
<name>BPPL_BITRH</name>
<keyword id="KW-0903">Direct protein sequencing</keyword>
<keyword id="KW-0873">Pyrrolidone carboxylic acid</keyword>
<keyword id="KW-0964">Secreted</keyword>
<keyword id="KW-0800">Toxin</keyword>
<sequence length="10" mass="1213">QNWPHPQIPP</sequence>
<proteinExistence type="evidence at protein level"/>